<keyword id="KW-0997">Cell inner membrane</keyword>
<keyword id="KW-1003">Cell membrane</keyword>
<keyword id="KW-0285">Flavoprotein</keyword>
<keyword id="KW-0288">FMN</keyword>
<keyword id="KW-0472">Membrane</keyword>
<keyword id="KW-0560">Oxidoreductase</keyword>
<sequence>MIISAASDYRAAAQRTLPPFLFHYIDGGAYAEYTLRRNVEDLSQVALRQRVLKNMSDLSLETTLFNETLSMPVALAPVGLCGMYARRGEVQAAAAADAKGIPFTLSTVSVCPIEEVAPTIKRPMWFQLYVLRDRGFMRNALERAKAAGCSTLVFTVDMPTPGARYRDAHSGMSGPNAAMRRYWQAVMHPKWAWDVGLNGRPHDLGNISAYLGKPTGLEDYIGWLANNFDPSISWKDLEWIREFWDGPMVIKGILDPEDARDAVRFGADGIVVSNHGGRQLDGVLSSARALPAIADAVKGDIAILADSGIRNGLDVVRMIALGADTVLLGRAYLYALATAGKAGVANLLDLIEKEMKVAMTLTGAKSISEISGDSLVQELGKSLPAALAPMSKGDAA</sequence>
<gene>
    <name evidence="1" type="primary">lldD</name>
    <name type="ordered locus">SeAg_B3911</name>
</gene>
<protein>
    <recommendedName>
        <fullName evidence="1">L-lactate dehydrogenase</fullName>
        <ecNumber evidence="1">1.1.-.-</ecNumber>
    </recommendedName>
</protein>
<proteinExistence type="inferred from homology"/>
<feature type="chain" id="PRO_0000383437" description="L-lactate dehydrogenase">
    <location>
        <begin position="1"/>
        <end position="396"/>
    </location>
</feature>
<feature type="domain" description="FMN hydroxy acid dehydrogenase" evidence="1">
    <location>
        <begin position="1"/>
        <end position="380"/>
    </location>
</feature>
<feature type="active site" description="Proton acceptor" evidence="1">
    <location>
        <position position="275"/>
    </location>
</feature>
<feature type="binding site" evidence="1">
    <location>
        <position position="24"/>
    </location>
    <ligand>
        <name>substrate</name>
    </ligand>
</feature>
<feature type="binding site" evidence="1">
    <location>
        <position position="106"/>
    </location>
    <ligand>
        <name>FMN</name>
        <dbReference type="ChEBI" id="CHEBI:58210"/>
    </ligand>
</feature>
<feature type="binding site" evidence="1">
    <location>
        <position position="127"/>
    </location>
    <ligand>
        <name>FMN</name>
        <dbReference type="ChEBI" id="CHEBI:58210"/>
    </ligand>
</feature>
<feature type="binding site" evidence="1">
    <location>
        <position position="129"/>
    </location>
    <ligand>
        <name>substrate</name>
    </ligand>
</feature>
<feature type="binding site" evidence="1">
    <location>
        <position position="155"/>
    </location>
    <ligand>
        <name>FMN</name>
        <dbReference type="ChEBI" id="CHEBI:58210"/>
    </ligand>
</feature>
<feature type="binding site" evidence="1">
    <location>
        <position position="164"/>
    </location>
    <ligand>
        <name>substrate</name>
    </ligand>
</feature>
<feature type="binding site" evidence="1">
    <location>
        <position position="251"/>
    </location>
    <ligand>
        <name>FMN</name>
        <dbReference type="ChEBI" id="CHEBI:58210"/>
    </ligand>
</feature>
<feature type="binding site" evidence="1">
    <location>
        <position position="278"/>
    </location>
    <ligand>
        <name>substrate</name>
    </ligand>
</feature>
<feature type="binding site" evidence="1">
    <location>
        <begin position="306"/>
        <end position="330"/>
    </location>
    <ligand>
        <name>FMN</name>
        <dbReference type="ChEBI" id="CHEBI:58210"/>
    </ligand>
</feature>
<comment type="function">
    <text evidence="1">Catalyzes the conversion of L-lactate to pyruvate. Is coupled to the respiratory chain.</text>
</comment>
<comment type="catalytic activity">
    <reaction evidence="1">
        <text>(S)-lactate + A = pyruvate + AH2</text>
        <dbReference type="Rhea" id="RHEA:45816"/>
        <dbReference type="ChEBI" id="CHEBI:13193"/>
        <dbReference type="ChEBI" id="CHEBI:15361"/>
        <dbReference type="ChEBI" id="CHEBI:16651"/>
        <dbReference type="ChEBI" id="CHEBI:17499"/>
    </reaction>
</comment>
<comment type="cofactor">
    <cofactor evidence="1">
        <name>FMN</name>
        <dbReference type="ChEBI" id="CHEBI:58210"/>
    </cofactor>
</comment>
<comment type="subcellular location">
    <subcellularLocation>
        <location evidence="1">Cell inner membrane</location>
        <topology evidence="1">Peripheral membrane protein</topology>
    </subcellularLocation>
</comment>
<comment type="similarity">
    <text evidence="1">Belongs to the FMN-dependent alpha-hydroxy acid dehydrogenase family.</text>
</comment>
<organism>
    <name type="scientific">Salmonella agona (strain SL483)</name>
    <dbReference type="NCBI Taxonomy" id="454166"/>
    <lineage>
        <taxon>Bacteria</taxon>
        <taxon>Pseudomonadati</taxon>
        <taxon>Pseudomonadota</taxon>
        <taxon>Gammaproteobacteria</taxon>
        <taxon>Enterobacterales</taxon>
        <taxon>Enterobacteriaceae</taxon>
        <taxon>Salmonella</taxon>
    </lineage>
</organism>
<accession>B5EXA8</accession>
<dbReference type="EC" id="1.1.-.-" evidence="1"/>
<dbReference type="EMBL" id="CP001138">
    <property type="protein sequence ID" value="ACH52956.1"/>
    <property type="molecule type" value="Genomic_DNA"/>
</dbReference>
<dbReference type="RefSeq" id="WP_000586988.1">
    <property type="nucleotide sequence ID" value="NC_011149.1"/>
</dbReference>
<dbReference type="SMR" id="B5EXA8"/>
<dbReference type="KEGG" id="sea:SeAg_B3911"/>
<dbReference type="HOGENOM" id="CLU_020639_0_0_6"/>
<dbReference type="Proteomes" id="UP000008819">
    <property type="component" value="Chromosome"/>
</dbReference>
<dbReference type="GO" id="GO:0005886">
    <property type="term" value="C:plasma membrane"/>
    <property type="evidence" value="ECO:0007669"/>
    <property type="project" value="UniProtKB-SubCell"/>
</dbReference>
<dbReference type="GO" id="GO:0010181">
    <property type="term" value="F:FMN binding"/>
    <property type="evidence" value="ECO:0007669"/>
    <property type="project" value="InterPro"/>
</dbReference>
<dbReference type="GO" id="GO:0004459">
    <property type="term" value="F:L-lactate dehydrogenase activity"/>
    <property type="evidence" value="ECO:0007669"/>
    <property type="project" value="UniProtKB-UniRule"/>
</dbReference>
<dbReference type="GO" id="GO:0009060">
    <property type="term" value="P:aerobic respiration"/>
    <property type="evidence" value="ECO:0007669"/>
    <property type="project" value="TreeGrafter"/>
</dbReference>
<dbReference type="GO" id="GO:0006089">
    <property type="term" value="P:lactate metabolic process"/>
    <property type="evidence" value="ECO:0007669"/>
    <property type="project" value="UniProtKB-UniRule"/>
</dbReference>
<dbReference type="CDD" id="cd02809">
    <property type="entry name" value="alpha_hydroxyacid_oxid_FMN"/>
    <property type="match status" value="1"/>
</dbReference>
<dbReference type="FunFam" id="3.20.20.70:FF:000029">
    <property type="entry name" value="L-lactate dehydrogenase"/>
    <property type="match status" value="1"/>
</dbReference>
<dbReference type="Gene3D" id="3.20.20.70">
    <property type="entry name" value="Aldolase class I"/>
    <property type="match status" value="1"/>
</dbReference>
<dbReference type="HAMAP" id="MF_01559">
    <property type="entry name" value="L_lact_dehydr"/>
    <property type="match status" value="1"/>
</dbReference>
<dbReference type="InterPro" id="IPR013785">
    <property type="entry name" value="Aldolase_TIM"/>
</dbReference>
<dbReference type="InterPro" id="IPR012133">
    <property type="entry name" value="Alpha-hydoxy_acid_DH_FMN"/>
</dbReference>
<dbReference type="InterPro" id="IPR000262">
    <property type="entry name" value="FMN-dep_DH"/>
</dbReference>
<dbReference type="InterPro" id="IPR037396">
    <property type="entry name" value="FMN_HAD"/>
</dbReference>
<dbReference type="InterPro" id="IPR008259">
    <property type="entry name" value="FMN_hydac_DH_AS"/>
</dbReference>
<dbReference type="InterPro" id="IPR020920">
    <property type="entry name" value="LldD"/>
</dbReference>
<dbReference type="NCBIfam" id="NF033901">
    <property type="entry name" value="L_lactate_LldD"/>
    <property type="match status" value="1"/>
</dbReference>
<dbReference type="NCBIfam" id="NF008398">
    <property type="entry name" value="PRK11197.1"/>
    <property type="match status" value="1"/>
</dbReference>
<dbReference type="PANTHER" id="PTHR10578:SF85">
    <property type="entry name" value="L-LACTATE DEHYDROGENASE"/>
    <property type="match status" value="1"/>
</dbReference>
<dbReference type="PANTHER" id="PTHR10578">
    <property type="entry name" value="S -2-HYDROXY-ACID OXIDASE-RELATED"/>
    <property type="match status" value="1"/>
</dbReference>
<dbReference type="Pfam" id="PF01070">
    <property type="entry name" value="FMN_dh"/>
    <property type="match status" value="1"/>
</dbReference>
<dbReference type="PIRSF" id="PIRSF000138">
    <property type="entry name" value="Al-hdrx_acd_dh"/>
    <property type="match status" value="1"/>
</dbReference>
<dbReference type="SUPFAM" id="SSF51395">
    <property type="entry name" value="FMN-linked oxidoreductases"/>
    <property type="match status" value="1"/>
</dbReference>
<dbReference type="PROSITE" id="PS00557">
    <property type="entry name" value="FMN_HYDROXY_ACID_DH_1"/>
    <property type="match status" value="1"/>
</dbReference>
<dbReference type="PROSITE" id="PS51349">
    <property type="entry name" value="FMN_HYDROXY_ACID_DH_2"/>
    <property type="match status" value="1"/>
</dbReference>
<reference key="1">
    <citation type="journal article" date="2011" name="J. Bacteriol.">
        <title>Comparative genomics of 28 Salmonella enterica isolates: evidence for CRISPR-mediated adaptive sublineage evolution.</title>
        <authorList>
            <person name="Fricke W.F."/>
            <person name="Mammel M.K."/>
            <person name="McDermott P.F."/>
            <person name="Tartera C."/>
            <person name="White D.G."/>
            <person name="Leclerc J.E."/>
            <person name="Ravel J."/>
            <person name="Cebula T.A."/>
        </authorList>
    </citation>
    <scope>NUCLEOTIDE SEQUENCE [LARGE SCALE GENOMIC DNA]</scope>
    <source>
        <strain>SL483</strain>
    </source>
</reference>
<evidence type="ECO:0000255" key="1">
    <source>
        <dbReference type="HAMAP-Rule" id="MF_01559"/>
    </source>
</evidence>
<name>LLDD_SALA4</name>